<comment type="function">
    <text evidence="3">Involved in the fatty acid synthesis (FAS II). Catalyzes the reduction of the carbon-carbon double bond of crotonyl-CoA to yield butyryl-CoA.</text>
</comment>
<comment type="catalytic activity">
    <reaction evidence="3">
        <text>a 2,3-saturated acyl-CoA + NAD(+) = a (2E)-enoyl-CoA + NADH + H(+)</text>
        <dbReference type="Rhea" id="RHEA:18177"/>
        <dbReference type="ChEBI" id="CHEBI:15378"/>
        <dbReference type="ChEBI" id="CHEBI:57540"/>
        <dbReference type="ChEBI" id="CHEBI:57945"/>
        <dbReference type="ChEBI" id="CHEBI:58856"/>
        <dbReference type="ChEBI" id="CHEBI:65111"/>
        <dbReference type="EC" id="1.3.1.44"/>
    </reaction>
</comment>
<comment type="biophysicochemical properties">
    <kinetics>
        <KM evidence="3">105.4 uM for NAD (at pH 6.2 and 25 degrees Celsius)</KM>
        <text evidence="3">kcat is 28.2 sec(-1) for reductase activity (at pH 6.2 and 25 degrees Celsius).</text>
    </kinetics>
</comment>
<comment type="pathway">
    <text evidence="5">Lipid metabolism; fatty acid biosynthesis.</text>
</comment>
<comment type="subunit">
    <text evidence="3">Monomer.</text>
</comment>
<comment type="biotechnology">
    <text evidence="2">Used in the biosynthesis of medium-chain volatile alcohols as biofuels engineered by microorganisms. The switch from the native flavin-dependent enoyl-CoA reductase used in the production of n-butanol, a key second-generation biofuel, to a flavin-independent trans-enoyl-CoA reductase from C.acetobutylicum leads to an order of magnitude increase in product yield in engineered E.coli.</text>
</comment>
<comment type="miscellaneous">
    <text evidence="6">Possesses high activity for the reduction reaction, but no activity for the reverse oxidation reaction.</text>
</comment>
<comment type="similarity">
    <text evidence="1">Belongs to the TER reductase family.</text>
</comment>
<name>FABV_CLOAB</name>
<sequence>MIVKAKFVKGFIRDVHPYGCRREVLNQIDYCKKAIGFRGPKKVLIVGASSGFGLATRISVAFGGPEAHTIGVSYETGATDRRIGTAGWYNNIFFKEFAKKKGLVAKNFIEDAFSNETKDKVIKYIKDEFGKIDLFVYSLAAPRRKDYKTGNVYTSRIKTILGDFEGPTIDVERDEITLKKVSSASIEEIEETRKVMGGEDWQEWCEELLYEDCFSDKATTIAYSYIGSPRTYKIYREGTIGIAKKDLEDKAKLINEKLNRVIGGRAFVSVNKALVTKASAYIPTFPLYAAILYKVMKEKNIHENCIMQIERMFSEKIYSNEKIQFDDKGRLRMDDLELRKDVQDEVDRIWSNITPENFKELSDYKGYKKEFMNLNGFDLDGVDYSKDLDIELLRKLEP</sequence>
<gene>
    <name evidence="4" type="primary">fabV</name>
    <name type="ordered locus">CA_C0462</name>
</gene>
<keyword id="KW-0002">3D-structure</keyword>
<keyword id="KW-0275">Fatty acid biosynthesis</keyword>
<keyword id="KW-0276">Fatty acid metabolism</keyword>
<keyword id="KW-0444">Lipid biosynthesis</keyword>
<keyword id="KW-0443">Lipid metabolism</keyword>
<keyword id="KW-0520">NAD</keyword>
<keyword id="KW-0560">Oxidoreductase</keyword>
<keyword id="KW-1185">Reference proteome</keyword>
<organism>
    <name type="scientific">Clostridium acetobutylicum (strain ATCC 824 / DSM 792 / JCM 1419 / IAM 19013 / LMG 5710 / NBRC 13948 / NRRL B-527 / VKM B-1787 / 2291 / W)</name>
    <dbReference type="NCBI Taxonomy" id="272562"/>
    <lineage>
        <taxon>Bacteria</taxon>
        <taxon>Bacillati</taxon>
        <taxon>Bacillota</taxon>
        <taxon>Clostridia</taxon>
        <taxon>Eubacteriales</taxon>
        <taxon>Clostridiaceae</taxon>
        <taxon>Clostridium</taxon>
    </lineage>
</organism>
<protein>
    <recommendedName>
        <fullName evidence="4">Trans-2-enoyl-CoA reductase [NADH]</fullName>
        <shortName evidence="4">TER</shortName>
        <ecNumber evidence="3">1.3.1.44</ecNumber>
    </recommendedName>
</protein>
<feature type="chain" id="PRO_0000220040" description="Trans-2-enoyl-CoA reductase [NADH]">
    <location>
        <begin position="1"/>
        <end position="398"/>
    </location>
</feature>
<feature type="active site" description="Proton donor" evidence="1 6">
    <location>
        <position position="235"/>
    </location>
</feature>
<feature type="binding site" evidence="3">
    <location>
        <begin position="47"/>
        <end position="52"/>
    </location>
    <ligand>
        <name>NAD(+)</name>
        <dbReference type="ChEBI" id="CHEBI:57540"/>
    </ligand>
</feature>
<feature type="binding site" evidence="3">
    <location>
        <begin position="74"/>
        <end position="75"/>
    </location>
    <ligand>
        <name>NAD(+)</name>
        <dbReference type="ChEBI" id="CHEBI:57540"/>
    </ligand>
</feature>
<feature type="binding site" evidence="3">
    <location>
        <begin position="111"/>
        <end position="112"/>
    </location>
    <ligand>
        <name>NAD(+)</name>
        <dbReference type="ChEBI" id="CHEBI:57540"/>
    </ligand>
</feature>
<feature type="binding site" evidence="3">
    <location>
        <begin position="139"/>
        <end position="140"/>
    </location>
    <ligand>
        <name>NAD(+)</name>
        <dbReference type="ChEBI" id="CHEBI:57540"/>
    </ligand>
</feature>
<feature type="binding site" evidence="3">
    <location>
        <position position="225"/>
    </location>
    <ligand>
        <name>substrate</name>
    </ligand>
</feature>
<feature type="binding site" evidence="3">
    <location>
        <position position="244"/>
    </location>
    <ligand>
        <name>NAD(+)</name>
        <dbReference type="ChEBI" id="CHEBI:57540"/>
    </ligand>
</feature>
<feature type="binding site" evidence="3">
    <location>
        <begin position="274"/>
        <end position="276"/>
    </location>
    <ligand>
        <name>NAD(+)</name>
        <dbReference type="ChEBI" id="CHEBI:57540"/>
    </ligand>
</feature>
<feature type="site" description="Plays an important role in discriminating NADH against NADPH" evidence="3">
    <location>
        <position position="75"/>
    </location>
</feature>
<feature type="mutagenesis site" description="Slight decrease of catalytic efficiency and 3-fold increase of the affinity for NADH compared to wild-type." evidence="3">
    <original>F</original>
    <variation>K</variation>
    <location>
        <position position="11"/>
    </location>
</feature>
<feature type="mutagenesis site" description="Able to use both NADH and NADPH as cofactor." evidence="3">
    <original>E</original>
    <variation>A</variation>
    <location>
        <position position="75"/>
    </location>
</feature>
<feature type="mutagenesis site" description="12-fold decrease of catalytic efficiency and slight decrease of the affinity for NADH compared to wild-type." evidence="3">
    <original>Y</original>
    <variation>A</variation>
    <location>
        <position position="225"/>
    </location>
</feature>
<feature type="mutagenesis site" description="Loss of reductase activity." evidence="3">
    <original>Y</original>
    <variation>F</variation>
    <location>
        <position position="235"/>
    </location>
</feature>
<feature type="mutagenesis site" description="Loss of reductase activity." evidence="3">
    <original>K</original>
    <variation>A</variation>
    <location>
        <position position="244"/>
    </location>
</feature>
<feature type="mutagenesis site" description="Slight decrease of catalytic efficiency and affinity for NADH compared to wild-type." evidence="3">
    <original>K</original>
    <variation>A</variation>
    <location>
        <position position="245"/>
    </location>
</feature>
<feature type="strand" evidence="7">
    <location>
        <begin position="11"/>
        <end position="13"/>
    </location>
</feature>
<feature type="helix" evidence="7">
    <location>
        <begin position="17"/>
        <end position="33"/>
    </location>
</feature>
<feature type="strand" evidence="7">
    <location>
        <begin position="41"/>
        <end position="47"/>
    </location>
</feature>
<feature type="helix" evidence="7">
    <location>
        <begin position="51"/>
        <end position="62"/>
    </location>
</feature>
<feature type="strand" evidence="7">
    <location>
        <begin position="63"/>
        <end position="65"/>
    </location>
</feature>
<feature type="strand" evidence="7">
    <location>
        <begin position="68"/>
        <end position="73"/>
    </location>
</feature>
<feature type="helix" evidence="7">
    <location>
        <begin position="86"/>
        <end position="100"/>
    </location>
</feature>
<feature type="strand" evidence="7">
    <location>
        <begin position="105"/>
        <end position="110"/>
    </location>
</feature>
<feature type="helix" evidence="7">
    <location>
        <begin position="115"/>
        <end position="127"/>
    </location>
</feature>
<feature type="strand" evidence="7">
    <location>
        <begin position="132"/>
        <end position="137"/>
    </location>
</feature>
<feature type="strand" evidence="7">
    <location>
        <begin position="142"/>
        <end position="145"/>
    </location>
</feature>
<feature type="turn" evidence="7">
    <location>
        <begin position="147"/>
        <end position="149"/>
    </location>
</feature>
<feature type="strand" evidence="7">
    <location>
        <begin position="152"/>
        <end position="154"/>
    </location>
</feature>
<feature type="strand" evidence="7">
    <location>
        <begin position="159"/>
        <end position="162"/>
    </location>
</feature>
<feature type="strand" evidence="7">
    <location>
        <begin position="164"/>
        <end position="170"/>
    </location>
</feature>
<feature type="turn" evidence="7">
    <location>
        <begin position="171"/>
        <end position="174"/>
    </location>
</feature>
<feature type="strand" evidence="7">
    <location>
        <begin position="175"/>
        <end position="181"/>
    </location>
</feature>
<feature type="helix" evidence="7">
    <location>
        <begin position="186"/>
        <end position="196"/>
    </location>
</feature>
<feature type="helix" evidence="7">
    <location>
        <begin position="199"/>
        <end position="210"/>
    </location>
</feature>
<feature type="strand" evidence="7">
    <location>
        <begin position="214"/>
        <end position="224"/>
    </location>
</feature>
<feature type="helix" evidence="7">
    <location>
        <begin position="229"/>
        <end position="231"/>
    </location>
</feature>
<feature type="turn" evidence="7">
    <location>
        <begin position="232"/>
        <end position="237"/>
    </location>
</feature>
<feature type="helix" evidence="7">
    <location>
        <begin position="239"/>
        <end position="262"/>
    </location>
</feature>
<feature type="strand" evidence="7">
    <location>
        <begin position="265"/>
        <end position="270"/>
    </location>
</feature>
<feature type="helix" evidence="7">
    <location>
        <begin position="277"/>
        <end position="280"/>
    </location>
</feature>
<feature type="helix" evidence="7">
    <location>
        <begin position="285"/>
        <end position="298"/>
    </location>
</feature>
<feature type="helix" evidence="7">
    <location>
        <begin position="305"/>
        <end position="315"/>
    </location>
</feature>
<feature type="strand" evidence="7">
    <location>
        <begin position="318"/>
        <end position="321"/>
    </location>
</feature>
<feature type="strand" evidence="7">
    <location>
        <begin position="331"/>
        <end position="333"/>
    </location>
</feature>
<feature type="turn" evidence="7">
    <location>
        <begin position="335"/>
        <end position="338"/>
    </location>
</feature>
<feature type="helix" evidence="7">
    <location>
        <begin position="340"/>
        <end position="352"/>
    </location>
</feature>
<feature type="turn" evidence="7">
    <location>
        <begin position="355"/>
        <end position="357"/>
    </location>
</feature>
<feature type="helix" evidence="7">
    <location>
        <begin position="358"/>
        <end position="361"/>
    </location>
</feature>
<feature type="helix" evidence="7">
    <location>
        <begin position="364"/>
        <end position="374"/>
    </location>
</feature>
<feature type="helix" evidence="7">
    <location>
        <begin position="390"/>
        <end position="394"/>
    </location>
</feature>
<dbReference type="EC" id="1.3.1.44" evidence="3"/>
<dbReference type="EMBL" id="AE001437">
    <property type="protein sequence ID" value="AAK78442.1"/>
    <property type="molecule type" value="Genomic_DNA"/>
</dbReference>
<dbReference type="PIR" id="G96956">
    <property type="entry name" value="G96956"/>
</dbReference>
<dbReference type="RefSeq" id="NP_347102.1">
    <property type="nucleotide sequence ID" value="NC_003030.1"/>
</dbReference>
<dbReference type="RefSeq" id="WP_010963784.1">
    <property type="nucleotide sequence ID" value="NC_003030.1"/>
</dbReference>
<dbReference type="PDB" id="4EUE">
    <property type="method" value="X-ray"/>
    <property type="resolution" value="2.00 A"/>
    <property type="chains" value="A=1-398"/>
</dbReference>
<dbReference type="PDB" id="4EUF">
    <property type="method" value="X-ray"/>
    <property type="resolution" value="2.70 A"/>
    <property type="chains" value="A=1-398"/>
</dbReference>
<dbReference type="PDB" id="4EUH">
    <property type="method" value="X-ray"/>
    <property type="resolution" value="2.10 A"/>
    <property type="chains" value="A=1-398"/>
</dbReference>
<dbReference type="PDBsum" id="4EUE"/>
<dbReference type="PDBsum" id="4EUF"/>
<dbReference type="PDBsum" id="4EUH"/>
<dbReference type="SMR" id="Q97LU2"/>
<dbReference type="STRING" id="272562.CA_C0462"/>
<dbReference type="GeneID" id="44996971"/>
<dbReference type="KEGG" id="cac:CA_C0462"/>
<dbReference type="PATRIC" id="fig|272562.8.peg.661"/>
<dbReference type="eggNOG" id="COG3007">
    <property type="taxonomic scope" value="Bacteria"/>
</dbReference>
<dbReference type="HOGENOM" id="CLU_057698_1_0_9"/>
<dbReference type="OrthoDB" id="9802260at2"/>
<dbReference type="BRENDA" id="1.3.1.44">
    <property type="organism ID" value="1452"/>
</dbReference>
<dbReference type="UniPathway" id="UPA00094"/>
<dbReference type="EvolutionaryTrace" id="Q97LU2"/>
<dbReference type="Proteomes" id="UP000000814">
    <property type="component" value="Chromosome"/>
</dbReference>
<dbReference type="GO" id="GO:0004318">
    <property type="term" value="F:enoyl-[acyl-carrier-protein] reductase (NADH) activity"/>
    <property type="evidence" value="ECO:0007669"/>
    <property type="project" value="TreeGrafter"/>
</dbReference>
<dbReference type="GO" id="GO:0051287">
    <property type="term" value="F:NAD binding"/>
    <property type="evidence" value="ECO:0000314"/>
    <property type="project" value="UniProtKB"/>
</dbReference>
<dbReference type="GO" id="GO:0050343">
    <property type="term" value="F:trans-2-enoyl-CoA reductase (NADH) activity"/>
    <property type="evidence" value="ECO:0000314"/>
    <property type="project" value="UniProtKB"/>
</dbReference>
<dbReference type="GO" id="GO:0006633">
    <property type="term" value="P:fatty acid biosynthetic process"/>
    <property type="evidence" value="ECO:0000314"/>
    <property type="project" value="UniProtKB"/>
</dbReference>
<dbReference type="Gene3D" id="3.40.50.720">
    <property type="entry name" value="NAD(P)-binding Rossmann-like Domain"/>
    <property type="match status" value="1"/>
</dbReference>
<dbReference type="HAMAP" id="MF_01838">
    <property type="entry name" value="FabV_reductase"/>
    <property type="match status" value="1"/>
</dbReference>
<dbReference type="InterPro" id="IPR024906">
    <property type="entry name" value="Eno_Rdtase_FAD-bd_dom"/>
</dbReference>
<dbReference type="InterPro" id="IPR024910">
    <property type="entry name" value="Enoyl-CoA_Rdtase_cat_dom"/>
</dbReference>
<dbReference type="InterPro" id="IPR050048">
    <property type="entry name" value="FabV-like_NADH_b"/>
</dbReference>
<dbReference type="InterPro" id="IPR036291">
    <property type="entry name" value="NAD(P)-bd_dom_sf"/>
</dbReference>
<dbReference type="InterPro" id="IPR010758">
    <property type="entry name" value="Trans-2-enoyl-CoA_reductase"/>
</dbReference>
<dbReference type="NCBIfam" id="NF043048">
    <property type="entry name" value="EnoyACPredFabV"/>
    <property type="match status" value="1"/>
</dbReference>
<dbReference type="NCBIfam" id="NF010177">
    <property type="entry name" value="PRK13656.1"/>
    <property type="match status" value="1"/>
</dbReference>
<dbReference type="PANTHER" id="PTHR37480">
    <property type="entry name" value="ENOYL-[ACYL-CARRIER-PROTEIN] REDUCTASE [NADH]"/>
    <property type="match status" value="1"/>
</dbReference>
<dbReference type="PANTHER" id="PTHR37480:SF1">
    <property type="entry name" value="ENOYL-[ACYL-CARRIER-PROTEIN] REDUCTASE [NADH]"/>
    <property type="match status" value="1"/>
</dbReference>
<dbReference type="Pfam" id="PF07055">
    <property type="entry name" value="Eno-Rase_FAD_bd"/>
    <property type="match status" value="1"/>
</dbReference>
<dbReference type="Pfam" id="PF12242">
    <property type="entry name" value="Eno-Rase_NADH_b"/>
    <property type="match status" value="1"/>
</dbReference>
<dbReference type="Pfam" id="PF12241">
    <property type="entry name" value="Enoyl_reductase"/>
    <property type="match status" value="1"/>
</dbReference>
<dbReference type="SUPFAM" id="SSF51735">
    <property type="entry name" value="NAD(P)-binding Rossmann-fold domains"/>
    <property type="match status" value="1"/>
</dbReference>
<proteinExistence type="evidence at protein level"/>
<accession>Q97LU2</accession>
<evidence type="ECO:0000255" key="1">
    <source>
        <dbReference type="HAMAP-Rule" id="MF_01838"/>
    </source>
</evidence>
<evidence type="ECO:0000269" key="2">
    <source>
    </source>
</evidence>
<evidence type="ECO:0000269" key="3">
    <source>
    </source>
</evidence>
<evidence type="ECO:0000303" key="4">
    <source>
    </source>
</evidence>
<evidence type="ECO:0000305" key="5"/>
<evidence type="ECO:0000305" key="6">
    <source>
    </source>
</evidence>
<evidence type="ECO:0007829" key="7">
    <source>
        <dbReference type="PDB" id="4EUE"/>
    </source>
</evidence>
<reference key="1">
    <citation type="journal article" date="2001" name="J. Bacteriol.">
        <title>Genome sequence and comparative analysis of the solvent-producing bacterium Clostridium acetobutylicum.</title>
        <authorList>
            <person name="Noelling J."/>
            <person name="Breton G."/>
            <person name="Omelchenko M.V."/>
            <person name="Makarova K.S."/>
            <person name="Zeng Q."/>
            <person name="Gibson R."/>
            <person name="Lee H.M."/>
            <person name="Dubois J."/>
            <person name="Qiu D."/>
            <person name="Hitti J."/>
            <person name="Wolf Y.I."/>
            <person name="Tatusov R.L."/>
            <person name="Sabathe F."/>
            <person name="Doucette-Stamm L.A."/>
            <person name="Soucaille P."/>
            <person name="Daly M.J."/>
            <person name="Bennett G.N."/>
            <person name="Koonin E.V."/>
            <person name="Smith D.R."/>
        </authorList>
    </citation>
    <scope>NUCLEOTIDE SEQUENCE [LARGE SCALE GENOMIC DNA]</scope>
    <source>
        <strain>ATCC 824 / DSM 792 / JCM 1419 / IAM 19013 / LMG 5710 / NBRC 13948 / NRRL B-527 / VKM B-1787 / 2291 / W</strain>
    </source>
</reference>
<reference key="2">
    <citation type="journal article" date="2011" name="Nat. Chem. Biol.">
        <title>Enzyme mechanism as a kinetic control element for designing synthetic biofuel pathways.</title>
        <authorList>
            <person name="Bond-Watts B.B."/>
            <person name="Bellerose R.J."/>
            <person name="Chang M.C."/>
        </authorList>
    </citation>
    <scope>BIOTECHNOLOGY</scope>
</reference>
<reference key="3">
    <citation type="journal article" date="2013" name="Biochem. J.">
        <title>Structures of trans-2-enoyl-CoA reductases from Clostridium acetobutylicum and Treponema denticola: insights into the substrate specificity and the catalytic mechanism.</title>
        <authorList>
            <person name="Hu K."/>
            <person name="Zhao M."/>
            <person name="Zhang T."/>
            <person name="Zha M."/>
            <person name="Zhong C."/>
            <person name="Jiang Y."/>
            <person name="Ding J."/>
        </authorList>
    </citation>
    <scope>X-RAY CRYSTALLOGRAPHY (2.00 ANGSTROMS) IN COMPLEX WITH NAD</scope>
    <scope>FUNCTION</scope>
    <scope>CATALYTIC ACTIVITY</scope>
    <scope>BIOPHYSICOCHEMICAL PROPERTIES</scope>
    <scope>MUTAGENESIS OF PHE-11; GLU-75; TYR-225; TYR-235; LYS-244 AND LYS-245</scope>
    <scope>SUBUNIT</scope>
</reference>